<protein>
    <recommendedName>
        <fullName evidence="1">Transcriptional repressor NrdR</fullName>
    </recommendedName>
</protein>
<proteinExistence type="inferred from homology"/>
<organism>
    <name type="scientific">Xylella fastidiosa (strain M23)</name>
    <dbReference type="NCBI Taxonomy" id="405441"/>
    <lineage>
        <taxon>Bacteria</taxon>
        <taxon>Pseudomonadati</taxon>
        <taxon>Pseudomonadota</taxon>
        <taxon>Gammaproteobacteria</taxon>
        <taxon>Lysobacterales</taxon>
        <taxon>Lysobacteraceae</taxon>
        <taxon>Xylella</taxon>
    </lineage>
</organism>
<comment type="function">
    <text evidence="1">Negatively regulates transcription of bacterial ribonucleotide reductase nrd genes and operons by binding to NrdR-boxes.</text>
</comment>
<comment type="cofactor">
    <cofactor evidence="1">
        <name>Zn(2+)</name>
        <dbReference type="ChEBI" id="CHEBI:29105"/>
    </cofactor>
    <text evidence="1">Binds 1 zinc ion.</text>
</comment>
<comment type="similarity">
    <text evidence="1">Belongs to the NrdR family.</text>
</comment>
<name>NRDR_XYLF2</name>
<feature type="chain" id="PRO_1000124566" description="Transcriptional repressor NrdR">
    <location>
        <begin position="1"/>
        <end position="177"/>
    </location>
</feature>
<feature type="domain" description="ATP-cone" evidence="1">
    <location>
        <begin position="49"/>
        <end position="139"/>
    </location>
</feature>
<feature type="zinc finger region" evidence="1">
    <location>
        <begin position="3"/>
        <end position="34"/>
    </location>
</feature>
<gene>
    <name evidence="1" type="primary">nrdR</name>
    <name type="ordered locus">XfasM23_1849</name>
</gene>
<accession>B2I8Q9</accession>
<dbReference type="EMBL" id="CP001011">
    <property type="protein sequence ID" value="ACB93250.1"/>
    <property type="molecule type" value="Genomic_DNA"/>
</dbReference>
<dbReference type="RefSeq" id="WP_004089673.1">
    <property type="nucleotide sequence ID" value="NC_010577.1"/>
</dbReference>
<dbReference type="SMR" id="B2I8Q9"/>
<dbReference type="GeneID" id="93905594"/>
<dbReference type="KEGG" id="xfn:XfasM23_1849"/>
<dbReference type="HOGENOM" id="CLU_108412_0_1_6"/>
<dbReference type="Proteomes" id="UP000001698">
    <property type="component" value="Chromosome"/>
</dbReference>
<dbReference type="GO" id="GO:0005524">
    <property type="term" value="F:ATP binding"/>
    <property type="evidence" value="ECO:0007669"/>
    <property type="project" value="UniProtKB-KW"/>
</dbReference>
<dbReference type="GO" id="GO:0003677">
    <property type="term" value="F:DNA binding"/>
    <property type="evidence" value="ECO:0007669"/>
    <property type="project" value="UniProtKB-KW"/>
</dbReference>
<dbReference type="GO" id="GO:0008270">
    <property type="term" value="F:zinc ion binding"/>
    <property type="evidence" value="ECO:0007669"/>
    <property type="project" value="UniProtKB-UniRule"/>
</dbReference>
<dbReference type="GO" id="GO:0045892">
    <property type="term" value="P:negative regulation of DNA-templated transcription"/>
    <property type="evidence" value="ECO:0007669"/>
    <property type="project" value="UniProtKB-UniRule"/>
</dbReference>
<dbReference type="HAMAP" id="MF_00440">
    <property type="entry name" value="NrdR"/>
    <property type="match status" value="1"/>
</dbReference>
<dbReference type="InterPro" id="IPR005144">
    <property type="entry name" value="ATP-cone_dom"/>
</dbReference>
<dbReference type="InterPro" id="IPR055173">
    <property type="entry name" value="NrdR-like_N"/>
</dbReference>
<dbReference type="InterPro" id="IPR003796">
    <property type="entry name" value="RNR_NrdR-like"/>
</dbReference>
<dbReference type="NCBIfam" id="TIGR00244">
    <property type="entry name" value="transcriptional regulator NrdR"/>
    <property type="match status" value="1"/>
</dbReference>
<dbReference type="PANTHER" id="PTHR30455">
    <property type="entry name" value="TRANSCRIPTIONAL REPRESSOR NRDR"/>
    <property type="match status" value="1"/>
</dbReference>
<dbReference type="PANTHER" id="PTHR30455:SF2">
    <property type="entry name" value="TRANSCRIPTIONAL REPRESSOR NRDR"/>
    <property type="match status" value="1"/>
</dbReference>
<dbReference type="Pfam" id="PF03477">
    <property type="entry name" value="ATP-cone"/>
    <property type="match status" value="1"/>
</dbReference>
<dbReference type="Pfam" id="PF22811">
    <property type="entry name" value="Zn_ribbon_NrdR"/>
    <property type="match status" value="1"/>
</dbReference>
<dbReference type="PROSITE" id="PS51161">
    <property type="entry name" value="ATP_CONE"/>
    <property type="match status" value="1"/>
</dbReference>
<evidence type="ECO:0000255" key="1">
    <source>
        <dbReference type="HAMAP-Rule" id="MF_00440"/>
    </source>
</evidence>
<reference key="1">
    <citation type="journal article" date="2010" name="J. Bacteriol.">
        <title>Whole genome sequences of two Xylella fastidiosa strains (M12 and M23) causing almond leaf scorch disease in California.</title>
        <authorList>
            <person name="Chen J."/>
            <person name="Xie G."/>
            <person name="Han S."/>
            <person name="Chertkov O."/>
            <person name="Sims D."/>
            <person name="Civerolo E.L."/>
        </authorList>
    </citation>
    <scope>NUCLEOTIDE SEQUENCE [LARGE SCALE GENOMIC DNA]</scope>
    <source>
        <strain>M23</strain>
    </source>
</reference>
<keyword id="KW-0067">ATP-binding</keyword>
<keyword id="KW-0238">DNA-binding</keyword>
<keyword id="KW-0479">Metal-binding</keyword>
<keyword id="KW-0547">Nucleotide-binding</keyword>
<keyword id="KW-0678">Repressor</keyword>
<keyword id="KW-0804">Transcription</keyword>
<keyword id="KW-0805">Transcription regulation</keyword>
<keyword id="KW-0862">Zinc</keyword>
<keyword id="KW-0863">Zinc-finger</keyword>
<sequence>MYCLFCQHTDTRVIDSRVSEDGATIRRRRECEACGERFSTLETIELKLPVIIKKDGGREAFDGRKLRTSFDRALQKRPVAEERIEMAMRAVIHRLRMAGEREVPSIVVGECVMAELRKLDHVGYVRFASVYRSFQDVADFREEIEKLESELLVSREQLPLLEAVMESIGHPSIDQGG</sequence>